<proteinExistence type="inferred from homology"/>
<comment type="function">
    <text evidence="1">Specifically methylates position 2 of adenine 2503 in 23S rRNA and position 2 of adenine 37 in tRNAs. m2A2503 modification seems to play a crucial role in the proofreading step occurring at the peptidyl transferase center and thus would serve to optimize ribosomal fidelity.</text>
</comment>
<comment type="catalytic activity">
    <reaction evidence="1">
        <text>adenosine(2503) in 23S rRNA + 2 reduced [2Fe-2S]-[ferredoxin] + 2 S-adenosyl-L-methionine = 2-methyladenosine(2503) in 23S rRNA + 5'-deoxyadenosine + L-methionine + 2 oxidized [2Fe-2S]-[ferredoxin] + S-adenosyl-L-homocysteine</text>
        <dbReference type="Rhea" id="RHEA:42916"/>
        <dbReference type="Rhea" id="RHEA-COMP:10000"/>
        <dbReference type="Rhea" id="RHEA-COMP:10001"/>
        <dbReference type="Rhea" id="RHEA-COMP:10152"/>
        <dbReference type="Rhea" id="RHEA-COMP:10282"/>
        <dbReference type="ChEBI" id="CHEBI:17319"/>
        <dbReference type="ChEBI" id="CHEBI:33737"/>
        <dbReference type="ChEBI" id="CHEBI:33738"/>
        <dbReference type="ChEBI" id="CHEBI:57844"/>
        <dbReference type="ChEBI" id="CHEBI:57856"/>
        <dbReference type="ChEBI" id="CHEBI:59789"/>
        <dbReference type="ChEBI" id="CHEBI:74411"/>
        <dbReference type="ChEBI" id="CHEBI:74497"/>
        <dbReference type="EC" id="2.1.1.192"/>
    </reaction>
</comment>
<comment type="catalytic activity">
    <reaction evidence="1">
        <text>adenosine(37) in tRNA + 2 reduced [2Fe-2S]-[ferredoxin] + 2 S-adenosyl-L-methionine = 2-methyladenosine(37) in tRNA + 5'-deoxyadenosine + L-methionine + 2 oxidized [2Fe-2S]-[ferredoxin] + S-adenosyl-L-homocysteine</text>
        <dbReference type="Rhea" id="RHEA:43332"/>
        <dbReference type="Rhea" id="RHEA-COMP:10000"/>
        <dbReference type="Rhea" id="RHEA-COMP:10001"/>
        <dbReference type="Rhea" id="RHEA-COMP:10162"/>
        <dbReference type="Rhea" id="RHEA-COMP:10485"/>
        <dbReference type="ChEBI" id="CHEBI:17319"/>
        <dbReference type="ChEBI" id="CHEBI:33737"/>
        <dbReference type="ChEBI" id="CHEBI:33738"/>
        <dbReference type="ChEBI" id="CHEBI:57844"/>
        <dbReference type="ChEBI" id="CHEBI:57856"/>
        <dbReference type="ChEBI" id="CHEBI:59789"/>
        <dbReference type="ChEBI" id="CHEBI:74411"/>
        <dbReference type="ChEBI" id="CHEBI:74497"/>
        <dbReference type="EC" id="2.1.1.192"/>
    </reaction>
</comment>
<comment type="cofactor">
    <cofactor evidence="1">
        <name>[4Fe-4S] cluster</name>
        <dbReference type="ChEBI" id="CHEBI:49883"/>
    </cofactor>
    <text evidence="1">Binds 1 [4Fe-4S] cluster. The cluster is coordinated with 3 cysteines and an exchangeable S-adenosyl-L-methionine.</text>
</comment>
<comment type="subcellular location">
    <subcellularLocation>
        <location evidence="1">Cytoplasm</location>
    </subcellularLocation>
</comment>
<comment type="miscellaneous">
    <text evidence="1">Reaction proceeds by a ping-pong mechanism involving intermediate methylation of a conserved cysteine residue.</text>
</comment>
<comment type="similarity">
    <text evidence="1">Belongs to the radical SAM superfamily. RlmN family.</text>
</comment>
<feature type="chain" id="PRO_0000350069" description="Dual-specificity RNA methyltransferase RlmN">
    <location>
        <begin position="1"/>
        <end position="359"/>
    </location>
</feature>
<feature type="domain" description="Radical SAM core" evidence="2">
    <location>
        <begin position="108"/>
        <end position="351"/>
    </location>
</feature>
<feature type="active site" description="Proton acceptor" evidence="1">
    <location>
        <position position="102"/>
    </location>
</feature>
<feature type="active site" description="S-methylcysteine intermediate" evidence="1">
    <location>
        <position position="354"/>
    </location>
</feature>
<feature type="binding site" evidence="1">
    <location>
        <position position="122"/>
    </location>
    <ligand>
        <name>[4Fe-4S] cluster</name>
        <dbReference type="ChEBI" id="CHEBI:49883"/>
        <note>4Fe-4S-S-AdoMet</note>
    </ligand>
</feature>
<feature type="binding site" evidence="1">
    <location>
        <position position="126"/>
    </location>
    <ligand>
        <name>[4Fe-4S] cluster</name>
        <dbReference type="ChEBI" id="CHEBI:49883"/>
        <note>4Fe-4S-S-AdoMet</note>
    </ligand>
</feature>
<feature type="binding site" evidence="1">
    <location>
        <position position="129"/>
    </location>
    <ligand>
        <name>[4Fe-4S] cluster</name>
        <dbReference type="ChEBI" id="CHEBI:49883"/>
        <note>4Fe-4S-S-AdoMet</note>
    </ligand>
</feature>
<feature type="binding site" evidence="1">
    <location>
        <begin position="178"/>
        <end position="179"/>
    </location>
    <ligand>
        <name>S-adenosyl-L-methionine</name>
        <dbReference type="ChEBI" id="CHEBI:59789"/>
    </ligand>
</feature>
<feature type="binding site" evidence="1">
    <location>
        <position position="210"/>
    </location>
    <ligand>
        <name>S-adenosyl-L-methionine</name>
        <dbReference type="ChEBI" id="CHEBI:59789"/>
    </ligand>
</feature>
<feature type="binding site" evidence="1">
    <location>
        <begin position="232"/>
        <end position="234"/>
    </location>
    <ligand>
        <name>S-adenosyl-L-methionine</name>
        <dbReference type="ChEBI" id="CHEBI:59789"/>
    </ligand>
</feature>
<feature type="binding site" evidence="1">
    <location>
        <position position="311"/>
    </location>
    <ligand>
        <name>S-adenosyl-L-methionine</name>
        <dbReference type="ChEBI" id="CHEBI:59789"/>
    </ligand>
</feature>
<feature type="disulfide bond" description="(transient)" evidence="1">
    <location>
        <begin position="115"/>
        <end position="354"/>
    </location>
</feature>
<gene>
    <name evidence="1" type="primary">rlmN</name>
    <name type="ordered locus">BCc_176</name>
</gene>
<organism>
    <name type="scientific">Buchnera aphidicola subsp. Cinara cedri (strain Cc)</name>
    <dbReference type="NCBI Taxonomy" id="372461"/>
    <lineage>
        <taxon>Bacteria</taxon>
        <taxon>Pseudomonadati</taxon>
        <taxon>Pseudomonadota</taxon>
        <taxon>Gammaproteobacteria</taxon>
        <taxon>Enterobacterales</taxon>
        <taxon>Erwiniaceae</taxon>
        <taxon>Buchnera</taxon>
    </lineage>
</organism>
<keyword id="KW-0004">4Fe-4S</keyword>
<keyword id="KW-0963">Cytoplasm</keyword>
<keyword id="KW-1015">Disulfide bond</keyword>
<keyword id="KW-0408">Iron</keyword>
<keyword id="KW-0411">Iron-sulfur</keyword>
<keyword id="KW-0479">Metal-binding</keyword>
<keyword id="KW-0489">Methyltransferase</keyword>
<keyword id="KW-1185">Reference proteome</keyword>
<keyword id="KW-0698">rRNA processing</keyword>
<keyword id="KW-0949">S-adenosyl-L-methionine</keyword>
<keyword id="KW-0808">Transferase</keyword>
<keyword id="KW-0819">tRNA processing</keyword>
<reference key="1">
    <citation type="journal article" date="2006" name="Science">
        <title>A small microbial genome: the end of a long symbiotic relationship?</title>
        <authorList>
            <person name="Perez-Brocal V."/>
            <person name="Gil R."/>
            <person name="Ramos S."/>
            <person name="Lamelas A."/>
            <person name="Postigo M."/>
            <person name="Michelena J.M."/>
            <person name="Silva F.J."/>
            <person name="Moya A."/>
            <person name="Latorre A."/>
        </authorList>
    </citation>
    <scope>NUCLEOTIDE SEQUENCE [LARGE SCALE GENOMIC DNA]</scope>
    <source>
        <strain>Cc</strain>
    </source>
</reference>
<accession>Q057Q1</accession>
<protein>
    <recommendedName>
        <fullName evidence="1">Dual-specificity RNA methyltransferase RlmN</fullName>
        <ecNumber evidence="1">2.1.1.192</ecNumber>
    </recommendedName>
    <alternativeName>
        <fullName evidence="1">23S rRNA (adenine(2503)-C(2))-methyltransferase</fullName>
    </alternativeName>
    <alternativeName>
        <fullName evidence="1">23S rRNA m2A2503 methyltransferase</fullName>
    </alternativeName>
    <alternativeName>
        <fullName evidence="1">Ribosomal RNA large subunit methyltransferase N</fullName>
    </alternativeName>
    <alternativeName>
        <fullName evidence="1">tRNA (adenine(37)-C(2))-methyltransferase</fullName>
    </alternativeName>
    <alternativeName>
        <fullName evidence="1">tRNA m2A37 methyltransferase</fullName>
    </alternativeName>
</protein>
<name>RLMN_BUCCC</name>
<sequence>MCKKNILSNIKKKKINLLNFNLKKMINFFIKIGEKKFRAIQITDWIYKKQNIKFDQMSNLNFFLKKKLNNIAVIKIPKCIKKIKSIDGTIKWKFLCNKEFIETIYIPEKKRATLCISSQVGCQLKCNFCATGQLGYKRNLLVSEIIGQIWYVINKIKKYNSKKKNFPPIKNIVMMGMGEPLLNLKNIIIAIDIILGNYGFNFSKNKVTLSTSGIVPAINKIAGKIDISLAVSLHASNNTIRNKIMPINKIYNIQLLLESIKNYLKKSSANKGIVTIEYVMLSKINDFQHHAIELSNLLKNIPCKINLIPWNPIKNSSYICSSSKNIINFANFLRKKGFIVIIRKNRGSDIQAACGQLIA</sequence>
<evidence type="ECO:0000255" key="1">
    <source>
        <dbReference type="HAMAP-Rule" id="MF_01849"/>
    </source>
</evidence>
<evidence type="ECO:0000255" key="2">
    <source>
        <dbReference type="PROSITE-ProRule" id="PRU01266"/>
    </source>
</evidence>
<dbReference type="EC" id="2.1.1.192" evidence="1"/>
<dbReference type="EMBL" id="CP000263">
    <property type="protein sequence ID" value="ABJ90648.1"/>
    <property type="molecule type" value="Genomic_DNA"/>
</dbReference>
<dbReference type="RefSeq" id="WP_011672567.1">
    <property type="nucleotide sequence ID" value="NC_008513.1"/>
</dbReference>
<dbReference type="SMR" id="Q057Q1"/>
<dbReference type="STRING" id="372461.BCc_176"/>
<dbReference type="KEGG" id="bcc:BCc_176"/>
<dbReference type="eggNOG" id="COG0820">
    <property type="taxonomic scope" value="Bacteria"/>
</dbReference>
<dbReference type="HOGENOM" id="CLU_029101_0_0_6"/>
<dbReference type="OrthoDB" id="9793973at2"/>
<dbReference type="Proteomes" id="UP000000669">
    <property type="component" value="Chromosome"/>
</dbReference>
<dbReference type="GO" id="GO:0005737">
    <property type="term" value="C:cytoplasm"/>
    <property type="evidence" value="ECO:0007669"/>
    <property type="project" value="UniProtKB-SubCell"/>
</dbReference>
<dbReference type="GO" id="GO:0051539">
    <property type="term" value="F:4 iron, 4 sulfur cluster binding"/>
    <property type="evidence" value="ECO:0007669"/>
    <property type="project" value="UniProtKB-UniRule"/>
</dbReference>
<dbReference type="GO" id="GO:0046872">
    <property type="term" value="F:metal ion binding"/>
    <property type="evidence" value="ECO:0007669"/>
    <property type="project" value="UniProtKB-KW"/>
</dbReference>
<dbReference type="GO" id="GO:0070040">
    <property type="term" value="F:rRNA (adenine(2503)-C2-)-methyltransferase activity"/>
    <property type="evidence" value="ECO:0007669"/>
    <property type="project" value="UniProtKB-UniRule"/>
</dbReference>
<dbReference type="GO" id="GO:0019843">
    <property type="term" value="F:rRNA binding"/>
    <property type="evidence" value="ECO:0007669"/>
    <property type="project" value="UniProtKB-UniRule"/>
</dbReference>
<dbReference type="GO" id="GO:0002935">
    <property type="term" value="F:tRNA (adenine(37)-C2)-methyltransferase activity"/>
    <property type="evidence" value="ECO:0007669"/>
    <property type="project" value="UniProtKB-UniRule"/>
</dbReference>
<dbReference type="GO" id="GO:0000049">
    <property type="term" value="F:tRNA binding"/>
    <property type="evidence" value="ECO:0007669"/>
    <property type="project" value="UniProtKB-UniRule"/>
</dbReference>
<dbReference type="GO" id="GO:0070475">
    <property type="term" value="P:rRNA base methylation"/>
    <property type="evidence" value="ECO:0007669"/>
    <property type="project" value="UniProtKB-UniRule"/>
</dbReference>
<dbReference type="GO" id="GO:0030488">
    <property type="term" value="P:tRNA methylation"/>
    <property type="evidence" value="ECO:0007669"/>
    <property type="project" value="UniProtKB-UniRule"/>
</dbReference>
<dbReference type="Gene3D" id="1.10.150.530">
    <property type="match status" value="1"/>
</dbReference>
<dbReference type="Gene3D" id="3.20.20.70">
    <property type="entry name" value="Aldolase class I"/>
    <property type="match status" value="1"/>
</dbReference>
<dbReference type="HAMAP" id="MF_01849">
    <property type="entry name" value="RNA_methyltr_RlmN"/>
    <property type="match status" value="1"/>
</dbReference>
<dbReference type="InterPro" id="IPR013785">
    <property type="entry name" value="Aldolase_TIM"/>
</dbReference>
<dbReference type="InterPro" id="IPR040072">
    <property type="entry name" value="Methyltransferase_A"/>
</dbReference>
<dbReference type="InterPro" id="IPR048641">
    <property type="entry name" value="RlmN_N"/>
</dbReference>
<dbReference type="InterPro" id="IPR027492">
    <property type="entry name" value="RNA_MTrfase_RlmN"/>
</dbReference>
<dbReference type="InterPro" id="IPR004383">
    <property type="entry name" value="rRNA_lsu_MTrfase_RlmN/Cfr"/>
</dbReference>
<dbReference type="InterPro" id="IPR007197">
    <property type="entry name" value="rSAM"/>
</dbReference>
<dbReference type="NCBIfam" id="TIGR00048">
    <property type="entry name" value="rRNA_mod_RlmN"/>
    <property type="match status" value="1"/>
</dbReference>
<dbReference type="PANTHER" id="PTHR30544">
    <property type="entry name" value="23S RRNA METHYLTRANSFERASE"/>
    <property type="match status" value="1"/>
</dbReference>
<dbReference type="PANTHER" id="PTHR30544:SF5">
    <property type="entry name" value="RADICAL SAM CORE DOMAIN-CONTAINING PROTEIN"/>
    <property type="match status" value="1"/>
</dbReference>
<dbReference type="Pfam" id="PF04055">
    <property type="entry name" value="Radical_SAM"/>
    <property type="match status" value="1"/>
</dbReference>
<dbReference type="Pfam" id="PF21016">
    <property type="entry name" value="RlmN_N"/>
    <property type="match status" value="1"/>
</dbReference>
<dbReference type="PIRSF" id="PIRSF006004">
    <property type="entry name" value="CHP00048"/>
    <property type="match status" value="1"/>
</dbReference>
<dbReference type="SFLD" id="SFLDF00275">
    <property type="entry name" value="adenosine_C2_methyltransferase"/>
    <property type="match status" value="1"/>
</dbReference>
<dbReference type="SFLD" id="SFLDG01062">
    <property type="entry name" value="methyltransferase_(Class_A)"/>
    <property type="match status" value="1"/>
</dbReference>
<dbReference type="SUPFAM" id="SSF102114">
    <property type="entry name" value="Radical SAM enzymes"/>
    <property type="match status" value="1"/>
</dbReference>
<dbReference type="PROSITE" id="PS51918">
    <property type="entry name" value="RADICAL_SAM"/>
    <property type="match status" value="1"/>
</dbReference>